<organism>
    <name type="scientific">Rickettsia akari (strain Hartford)</name>
    <dbReference type="NCBI Taxonomy" id="293614"/>
    <lineage>
        <taxon>Bacteria</taxon>
        <taxon>Pseudomonadati</taxon>
        <taxon>Pseudomonadota</taxon>
        <taxon>Alphaproteobacteria</taxon>
        <taxon>Rickettsiales</taxon>
        <taxon>Rickettsiaceae</taxon>
        <taxon>Rickettsieae</taxon>
        <taxon>Rickettsia</taxon>
        <taxon>spotted fever group</taxon>
    </lineage>
</organism>
<proteinExistence type="inferred from homology"/>
<comment type="function">
    <text evidence="1">This protein binds to 23S rRNA in the presence of protein L20.</text>
</comment>
<comment type="subunit">
    <text evidence="1">Part of the 50S ribosomal subunit. Contacts protein L20.</text>
</comment>
<comment type="similarity">
    <text evidence="1">Belongs to the bacterial ribosomal protein bL21 family.</text>
</comment>
<gene>
    <name evidence="1" type="primary">rplU</name>
    <name type="ordered locus">A1C_05695</name>
</gene>
<evidence type="ECO:0000255" key="1">
    <source>
        <dbReference type="HAMAP-Rule" id="MF_01363"/>
    </source>
</evidence>
<evidence type="ECO:0000305" key="2"/>
<sequence length="105" mass="12004">MFAVIKAGGKQYKVDRNSIIKVEKIDGELGSKIQFDQILMIGEYSKPSFIGTPIVKGAVVTAEITNQLKDNKIIVFKKKRRKNYRRKAGHRQELTELKILDITKQ</sequence>
<name>RL21_RICAH</name>
<keyword id="KW-0687">Ribonucleoprotein</keyword>
<keyword id="KW-0689">Ribosomal protein</keyword>
<keyword id="KW-0694">RNA-binding</keyword>
<keyword id="KW-0699">rRNA-binding</keyword>
<protein>
    <recommendedName>
        <fullName evidence="1">Large ribosomal subunit protein bL21</fullName>
    </recommendedName>
    <alternativeName>
        <fullName evidence="2">50S ribosomal protein L21</fullName>
    </alternativeName>
</protein>
<accession>A8GPP9</accession>
<reference key="1">
    <citation type="submission" date="2007-09" db="EMBL/GenBank/DDBJ databases">
        <title>Complete genome sequence of Rickettsia akari.</title>
        <authorList>
            <person name="Madan A."/>
            <person name="Fahey J."/>
            <person name="Helton E."/>
            <person name="Ketteman M."/>
            <person name="Madan A."/>
            <person name="Rodrigues S."/>
            <person name="Sanchez A."/>
            <person name="Whiting M."/>
            <person name="Dasch G."/>
            <person name="Eremeeva M."/>
        </authorList>
    </citation>
    <scope>NUCLEOTIDE SEQUENCE [LARGE SCALE GENOMIC DNA]</scope>
    <source>
        <strain>Hartford</strain>
    </source>
</reference>
<dbReference type="EMBL" id="CP000847">
    <property type="protein sequence ID" value="ABV75374.1"/>
    <property type="molecule type" value="Genomic_DNA"/>
</dbReference>
<dbReference type="RefSeq" id="WP_004997480.1">
    <property type="nucleotide sequence ID" value="NC_009881.1"/>
</dbReference>
<dbReference type="SMR" id="A8GPP9"/>
<dbReference type="STRING" id="293614.A1C_05695"/>
<dbReference type="GeneID" id="95361581"/>
<dbReference type="KEGG" id="rak:A1C_05695"/>
<dbReference type="eggNOG" id="COG0261">
    <property type="taxonomic scope" value="Bacteria"/>
</dbReference>
<dbReference type="HOGENOM" id="CLU_061463_3_2_5"/>
<dbReference type="Proteomes" id="UP000006830">
    <property type="component" value="Chromosome"/>
</dbReference>
<dbReference type="GO" id="GO:0005737">
    <property type="term" value="C:cytoplasm"/>
    <property type="evidence" value="ECO:0007669"/>
    <property type="project" value="UniProtKB-ARBA"/>
</dbReference>
<dbReference type="GO" id="GO:1990904">
    <property type="term" value="C:ribonucleoprotein complex"/>
    <property type="evidence" value="ECO:0007669"/>
    <property type="project" value="UniProtKB-KW"/>
</dbReference>
<dbReference type="GO" id="GO:0005840">
    <property type="term" value="C:ribosome"/>
    <property type="evidence" value="ECO:0007669"/>
    <property type="project" value="UniProtKB-KW"/>
</dbReference>
<dbReference type="GO" id="GO:0019843">
    <property type="term" value="F:rRNA binding"/>
    <property type="evidence" value="ECO:0007669"/>
    <property type="project" value="UniProtKB-UniRule"/>
</dbReference>
<dbReference type="GO" id="GO:0003735">
    <property type="term" value="F:structural constituent of ribosome"/>
    <property type="evidence" value="ECO:0007669"/>
    <property type="project" value="InterPro"/>
</dbReference>
<dbReference type="GO" id="GO:0006412">
    <property type="term" value="P:translation"/>
    <property type="evidence" value="ECO:0007669"/>
    <property type="project" value="UniProtKB-UniRule"/>
</dbReference>
<dbReference type="HAMAP" id="MF_01363">
    <property type="entry name" value="Ribosomal_bL21"/>
    <property type="match status" value="1"/>
</dbReference>
<dbReference type="InterPro" id="IPR028909">
    <property type="entry name" value="bL21-like"/>
</dbReference>
<dbReference type="InterPro" id="IPR036164">
    <property type="entry name" value="bL21-like_sf"/>
</dbReference>
<dbReference type="InterPro" id="IPR001787">
    <property type="entry name" value="Ribosomal_bL21"/>
</dbReference>
<dbReference type="InterPro" id="IPR018258">
    <property type="entry name" value="Ribosomal_bL21_CS"/>
</dbReference>
<dbReference type="NCBIfam" id="TIGR00061">
    <property type="entry name" value="L21"/>
    <property type="match status" value="1"/>
</dbReference>
<dbReference type="PANTHER" id="PTHR21349">
    <property type="entry name" value="50S RIBOSOMAL PROTEIN L21"/>
    <property type="match status" value="1"/>
</dbReference>
<dbReference type="PANTHER" id="PTHR21349:SF0">
    <property type="entry name" value="LARGE RIBOSOMAL SUBUNIT PROTEIN BL21M"/>
    <property type="match status" value="1"/>
</dbReference>
<dbReference type="Pfam" id="PF00829">
    <property type="entry name" value="Ribosomal_L21p"/>
    <property type="match status" value="1"/>
</dbReference>
<dbReference type="SUPFAM" id="SSF141091">
    <property type="entry name" value="L21p-like"/>
    <property type="match status" value="1"/>
</dbReference>
<dbReference type="PROSITE" id="PS01169">
    <property type="entry name" value="RIBOSOMAL_L21"/>
    <property type="match status" value="1"/>
</dbReference>
<feature type="chain" id="PRO_1000067885" description="Large ribosomal subunit protein bL21">
    <location>
        <begin position="1"/>
        <end position="105"/>
    </location>
</feature>